<proteinExistence type="inferred from homology"/>
<evidence type="ECO:0000255" key="1">
    <source>
        <dbReference type="HAMAP-Rule" id="MF_00758"/>
    </source>
</evidence>
<protein>
    <recommendedName>
        <fullName evidence="1">UPF0301 protein Pden_0436</fullName>
    </recommendedName>
</protein>
<sequence length="190" mass="20476">MDQSSNLTGKMLIAMPGMRDPRFEQSVILICAHSEDGAMGLVVNRPLPEIGFSDLLAQLGIQAGANALDIPVRFGGPVEPGRGFVLHRAPREIELDENRMRITDDLAMSTTRDILEDFARGLGPQPAMLALGYAGWGPGQLDSEIRENGWLTSDRGDEIIFGAEDAGKWRAALKSLGIDPLMLSPDAGHA</sequence>
<dbReference type="EMBL" id="CP000489">
    <property type="protein sequence ID" value="ABL68550.1"/>
    <property type="molecule type" value="Genomic_DNA"/>
</dbReference>
<dbReference type="RefSeq" id="WP_011746783.1">
    <property type="nucleotide sequence ID" value="NC_008686.1"/>
</dbReference>
<dbReference type="SMR" id="A1AZ56"/>
<dbReference type="STRING" id="318586.Pden_0436"/>
<dbReference type="EnsemblBacteria" id="ABL68550">
    <property type="protein sequence ID" value="ABL68550"/>
    <property type="gene ID" value="Pden_0436"/>
</dbReference>
<dbReference type="GeneID" id="93451660"/>
<dbReference type="KEGG" id="pde:Pden_0436"/>
<dbReference type="eggNOG" id="COG1678">
    <property type="taxonomic scope" value="Bacteria"/>
</dbReference>
<dbReference type="HOGENOM" id="CLU_057596_1_0_5"/>
<dbReference type="OrthoDB" id="9807486at2"/>
<dbReference type="Proteomes" id="UP000000361">
    <property type="component" value="Chromosome 1"/>
</dbReference>
<dbReference type="GO" id="GO:0005829">
    <property type="term" value="C:cytosol"/>
    <property type="evidence" value="ECO:0007669"/>
    <property type="project" value="TreeGrafter"/>
</dbReference>
<dbReference type="Gene3D" id="3.40.1740.10">
    <property type="entry name" value="VC0467-like"/>
    <property type="match status" value="1"/>
</dbReference>
<dbReference type="HAMAP" id="MF_00758">
    <property type="entry name" value="UPF0301"/>
    <property type="match status" value="1"/>
</dbReference>
<dbReference type="InterPro" id="IPR003774">
    <property type="entry name" value="AlgH-like"/>
</dbReference>
<dbReference type="PANTHER" id="PTHR30327">
    <property type="entry name" value="UNCHARACTERIZED PROTEIN YQGE"/>
    <property type="match status" value="1"/>
</dbReference>
<dbReference type="PANTHER" id="PTHR30327:SF1">
    <property type="entry name" value="UPF0301 PROTEIN YQGE"/>
    <property type="match status" value="1"/>
</dbReference>
<dbReference type="Pfam" id="PF02622">
    <property type="entry name" value="DUF179"/>
    <property type="match status" value="1"/>
</dbReference>
<dbReference type="SUPFAM" id="SSF143456">
    <property type="entry name" value="VC0467-like"/>
    <property type="match status" value="1"/>
</dbReference>
<keyword id="KW-1185">Reference proteome</keyword>
<gene>
    <name type="ordered locus">Pden_0436</name>
</gene>
<reference key="1">
    <citation type="submission" date="2006-12" db="EMBL/GenBank/DDBJ databases">
        <title>Complete sequence of chromosome 1 of Paracoccus denitrificans PD1222.</title>
        <authorList>
            <person name="Copeland A."/>
            <person name="Lucas S."/>
            <person name="Lapidus A."/>
            <person name="Barry K."/>
            <person name="Detter J.C."/>
            <person name="Glavina del Rio T."/>
            <person name="Hammon N."/>
            <person name="Israni S."/>
            <person name="Dalin E."/>
            <person name="Tice H."/>
            <person name="Pitluck S."/>
            <person name="Munk A.C."/>
            <person name="Brettin T."/>
            <person name="Bruce D."/>
            <person name="Han C."/>
            <person name="Tapia R."/>
            <person name="Gilna P."/>
            <person name="Schmutz J."/>
            <person name="Larimer F."/>
            <person name="Land M."/>
            <person name="Hauser L."/>
            <person name="Kyrpides N."/>
            <person name="Lykidis A."/>
            <person name="Spiro S."/>
            <person name="Richardson D.J."/>
            <person name="Moir J.W.B."/>
            <person name="Ferguson S.J."/>
            <person name="van Spanning R.J.M."/>
            <person name="Richardson P."/>
        </authorList>
    </citation>
    <scope>NUCLEOTIDE SEQUENCE [LARGE SCALE GENOMIC DNA]</scope>
    <source>
        <strain>Pd 1222</strain>
    </source>
</reference>
<accession>A1AZ56</accession>
<feature type="chain" id="PRO_1000046670" description="UPF0301 protein Pden_0436">
    <location>
        <begin position="1"/>
        <end position="190"/>
    </location>
</feature>
<organism>
    <name type="scientific">Paracoccus denitrificans (strain Pd 1222)</name>
    <dbReference type="NCBI Taxonomy" id="318586"/>
    <lineage>
        <taxon>Bacteria</taxon>
        <taxon>Pseudomonadati</taxon>
        <taxon>Pseudomonadota</taxon>
        <taxon>Alphaproteobacteria</taxon>
        <taxon>Rhodobacterales</taxon>
        <taxon>Paracoccaceae</taxon>
        <taxon>Paracoccus</taxon>
    </lineage>
</organism>
<name>Y436_PARDP</name>
<comment type="similarity">
    <text evidence="1">Belongs to the UPF0301 (AlgH) family.</text>
</comment>